<gene>
    <name evidence="4" type="primary">npr-29</name>
    <name evidence="4" type="ORF">ZC84.4</name>
</gene>
<dbReference type="EMBL" id="Z19157">
    <property type="protein sequence ID" value="CAA79566.3"/>
    <property type="molecule type" value="Genomic_DNA"/>
</dbReference>
<dbReference type="PIR" id="S28295">
    <property type="entry name" value="S28295"/>
</dbReference>
<dbReference type="RefSeq" id="NP_499038.1">
    <property type="nucleotide sequence ID" value="NM_066637.4"/>
</dbReference>
<dbReference type="SMR" id="Q03613"/>
<dbReference type="BioGRID" id="41499">
    <property type="interactions" value="2"/>
</dbReference>
<dbReference type="FunCoup" id="Q03613">
    <property type="interactions" value="1"/>
</dbReference>
<dbReference type="STRING" id="6239.ZC84.4.1"/>
<dbReference type="GlyCosmos" id="Q03613">
    <property type="glycosylation" value="1 site, No reported glycans"/>
</dbReference>
<dbReference type="iPTMnet" id="Q03613"/>
<dbReference type="PaxDb" id="6239-ZC84.4"/>
<dbReference type="EnsemblMetazoa" id="ZC84.4.1">
    <property type="protein sequence ID" value="ZC84.4.1"/>
    <property type="gene ID" value="WBGene00013848"/>
</dbReference>
<dbReference type="GeneID" id="176300"/>
<dbReference type="KEGG" id="cel:CELE_ZC84.4"/>
<dbReference type="UCSC" id="ZC84.4">
    <property type="organism name" value="c. elegans"/>
</dbReference>
<dbReference type="AGR" id="WB:WBGene00013848"/>
<dbReference type="CTD" id="176300"/>
<dbReference type="WormBase" id="ZC84.4">
    <property type="protein sequence ID" value="CE24711"/>
    <property type="gene ID" value="WBGene00013848"/>
    <property type="gene designation" value="npr-29"/>
</dbReference>
<dbReference type="eggNOG" id="KOG3656">
    <property type="taxonomic scope" value="Eukaryota"/>
</dbReference>
<dbReference type="HOGENOM" id="CLU_053029_0_0_1"/>
<dbReference type="InParanoid" id="Q03613"/>
<dbReference type="OMA" id="PFQGYRT"/>
<dbReference type="OrthoDB" id="6076970at2759"/>
<dbReference type="PhylomeDB" id="Q03613"/>
<dbReference type="PRO" id="PR:Q03613"/>
<dbReference type="Proteomes" id="UP000001940">
    <property type="component" value="Chromosome III"/>
</dbReference>
<dbReference type="Bgee" id="WBGene00013848">
    <property type="expression patterns" value="Expressed in larva and 3 other cell types or tissues"/>
</dbReference>
<dbReference type="GO" id="GO:0005886">
    <property type="term" value="C:plasma membrane"/>
    <property type="evidence" value="ECO:0007669"/>
    <property type="project" value="UniProtKB-SubCell"/>
</dbReference>
<dbReference type="GO" id="GO:0004930">
    <property type="term" value="F:G protein-coupled receptor activity"/>
    <property type="evidence" value="ECO:0007669"/>
    <property type="project" value="UniProtKB-KW"/>
</dbReference>
<dbReference type="GO" id="GO:0007186">
    <property type="term" value="P:G protein-coupled receptor signaling pathway"/>
    <property type="evidence" value="ECO:0000318"/>
    <property type="project" value="GO_Central"/>
</dbReference>
<dbReference type="CDD" id="cd00637">
    <property type="entry name" value="7tm_classA_rhodopsin-like"/>
    <property type="match status" value="1"/>
</dbReference>
<dbReference type="FunFam" id="1.20.1070.10:FF:000431">
    <property type="entry name" value="NeuroPeptide Receptor family"/>
    <property type="match status" value="1"/>
</dbReference>
<dbReference type="Gene3D" id="1.20.1070.10">
    <property type="entry name" value="Rhodopsin 7-helix transmembrane proteins"/>
    <property type="match status" value="1"/>
</dbReference>
<dbReference type="InterPro" id="IPR000276">
    <property type="entry name" value="GPCR_Rhodpsn"/>
</dbReference>
<dbReference type="InterPro" id="IPR017452">
    <property type="entry name" value="GPCR_Rhodpsn_7TM"/>
</dbReference>
<dbReference type="PANTHER" id="PTHR24229:SF40">
    <property type="entry name" value="ALLATOSTATIN C RECEPTOR 1-RELATED"/>
    <property type="match status" value="1"/>
</dbReference>
<dbReference type="PANTHER" id="PTHR24229">
    <property type="entry name" value="NEUROPEPTIDES RECEPTOR"/>
    <property type="match status" value="1"/>
</dbReference>
<dbReference type="Pfam" id="PF00001">
    <property type="entry name" value="7tm_1"/>
    <property type="match status" value="1"/>
</dbReference>
<dbReference type="PRINTS" id="PR00237">
    <property type="entry name" value="GPCRRHODOPSN"/>
</dbReference>
<dbReference type="SUPFAM" id="SSF81321">
    <property type="entry name" value="Family A G protein-coupled receptor-like"/>
    <property type="match status" value="1"/>
</dbReference>
<dbReference type="PROSITE" id="PS50262">
    <property type="entry name" value="G_PROTEIN_RECEP_F1_2"/>
    <property type="match status" value="1"/>
</dbReference>
<proteinExistence type="inferred from homology"/>
<evidence type="ECO:0000255" key="1"/>
<evidence type="ECO:0000255" key="2">
    <source>
        <dbReference type="PROSITE-ProRule" id="PRU00521"/>
    </source>
</evidence>
<evidence type="ECO:0000305" key="3"/>
<evidence type="ECO:0000312" key="4">
    <source>
        <dbReference type="WormBase" id="ZC84.4"/>
    </source>
</evidence>
<organism>
    <name type="scientific">Caenorhabditis elegans</name>
    <dbReference type="NCBI Taxonomy" id="6239"/>
    <lineage>
        <taxon>Eukaryota</taxon>
        <taxon>Metazoa</taxon>
        <taxon>Ecdysozoa</taxon>
        <taxon>Nematoda</taxon>
        <taxon>Chromadorea</taxon>
        <taxon>Rhabditida</taxon>
        <taxon>Rhabditina</taxon>
        <taxon>Rhabditomorpha</taxon>
        <taxon>Rhabditoidea</taxon>
        <taxon>Rhabditidae</taxon>
        <taxon>Peloderinae</taxon>
        <taxon>Caenorhabditis</taxon>
    </lineage>
</organism>
<accession>Q03613</accession>
<sequence>MDFTENEEEYEHWTHIERRVPFQGYRTYVASTYISFNVVGFVINAWVLYVVAPLLFAPAIKVPKSILFYIFALCVGDLMTMIAMLLLVIELVFGTWQFSSMVCTSYLIFDSMNKFMAPMIVFLISRTCYSTVCLDKTRGEKAATLKYAIIQFCIAFAFVMILLWPVFAYSQVFTFYMNPNSTAQEVTVMRKCGFFPPPQIEFWFNLIACITSYAVPLFGIIYWYVSVPFFLKRRALTTLVASSSMDAALRKVITTVLLLTVIYVLCWTPYWVSMFANRIWIMEKKSIIIISYFIHLLPYISCVAYPLIFTLLNRGIRSAHAKIVADQRRRFRSLTDEASSQIRTAIRTIPGTKMKKNEFLTRTEEISSDKIASEAVSEFREGLPSQTSFPDETLL</sequence>
<keyword id="KW-1003">Cell membrane</keyword>
<keyword id="KW-0297">G-protein coupled receptor</keyword>
<keyword id="KW-0325">Glycoprotein</keyword>
<keyword id="KW-0472">Membrane</keyword>
<keyword id="KW-0675">Receptor</keyword>
<keyword id="KW-1185">Reference proteome</keyword>
<keyword id="KW-0807">Transducer</keyword>
<keyword id="KW-0812">Transmembrane</keyword>
<keyword id="KW-1133">Transmembrane helix</keyword>
<comment type="function">
    <text>Not known. Putative receptor.</text>
</comment>
<comment type="subcellular location">
    <subcellularLocation>
        <location evidence="3">Cell membrane</location>
        <topology evidence="3">Multi-pass membrane protein</topology>
    </subcellularLocation>
</comment>
<comment type="similarity">
    <text evidence="2">Belongs to the G-protein coupled receptor 1 family.</text>
</comment>
<protein>
    <recommendedName>
        <fullName evidence="4">Probable G-protein coupled receptor npr-29</fullName>
    </recommendedName>
</protein>
<name>NPR29_CAEEL</name>
<feature type="chain" id="PRO_0000070227" description="Probable G-protein coupled receptor npr-29" evidence="3">
    <location>
        <begin position="1"/>
        <end position="395"/>
    </location>
</feature>
<feature type="transmembrane region" description="Helical; Name=1" evidence="1">
    <location>
        <begin position="38"/>
        <end position="58"/>
    </location>
</feature>
<feature type="transmembrane region" description="Helical; Name=2" evidence="1">
    <location>
        <begin position="66"/>
        <end position="86"/>
    </location>
</feature>
<feature type="transmembrane region" description="Helical; Name=3" evidence="1">
    <location>
        <begin position="89"/>
        <end position="109"/>
    </location>
</feature>
<feature type="transmembrane region" description="Helical; Name=4" evidence="1">
    <location>
        <begin position="148"/>
        <end position="168"/>
    </location>
</feature>
<feature type="transmembrane region" description="Helical; Name=5" evidence="1">
    <location>
        <begin position="202"/>
        <end position="222"/>
    </location>
</feature>
<feature type="transmembrane region" description="Helical; Name=6" evidence="1">
    <location>
        <begin position="252"/>
        <end position="272"/>
    </location>
</feature>
<feature type="transmembrane region" description="Helical; Name=7" evidence="1">
    <location>
        <begin position="287"/>
        <end position="307"/>
    </location>
</feature>
<feature type="glycosylation site" description="N-linked (GlcNAc...) asparagine" evidence="1">
    <location>
        <position position="180"/>
    </location>
</feature>
<reference key="1">
    <citation type="journal article" date="1994" name="Nature">
        <title>2.2 Mb of contiguous nucleotide sequence from chromosome III of C. elegans.</title>
        <authorList>
            <person name="Wilson R."/>
            <person name="Ainscough R."/>
            <person name="Anderson K."/>
            <person name="Baynes C."/>
            <person name="Berks M."/>
            <person name="Bonfield J."/>
            <person name="Burton J."/>
            <person name="Connell M."/>
            <person name="Copsey T."/>
            <person name="Cooper J."/>
            <person name="Coulson A."/>
            <person name="Craxton M."/>
            <person name="Dear S."/>
            <person name="Du Z."/>
            <person name="Durbin R."/>
            <person name="Favello A."/>
            <person name="Fraser A."/>
            <person name="Fulton L."/>
            <person name="Gardner A."/>
            <person name="Green P."/>
            <person name="Hawkins T."/>
            <person name="Hillier L."/>
            <person name="Jier M."/>
            <person name="Johnston L."/>
            <person name="Jones M."/>
            <person name="Kershaw J."/>
            <person name="Kirsten J."/>
            <person name="Laisster N."/>
            <person name="Latreille P."/>
            <person name="Lightning J."/>
            <person name="Lloyd C."/>
            <person name="Mortimore B."/>
            <person name="O'Callaghan M."/>
            <person name="Parsons J."/>
            <person name="Percy C."/>
            <person name="Rifken L."/>
            <person name="Roopra A."/>
            <person name="Saunders D."/>
            <person name="Shownkeen R."/>
            <person name="Sims M."/>
            <person name="Smaldon N."/>
            <person name="Smith A."/>
            <person name="Smith M."/>
            <person name="Sonnhammer E."/>
            <person name="Staden R."/>
            <person name="Sulston J."/>
            <person name="Thierry-Mieg J."/>
            <person name="Thomas K."/>
            <person name="Vaudin M."/>
            <person name="Vaughan K."/>
            <person name="Waterston R."/>
            <person name="Watson A."/>
            <person name="Weinstock L."/>
            <person name="Wilkinson-Sproat J."/>
            <person name="Wohldman P."/>
        </authorList>
    </citation>
    <scope>NUCLEOTIDE SEQUENCE [LARGE SCALE GENOMIC DNA]</scope>
    <source>
        <strain>Bristol N2</strain>
    </source>
</reference>
<reference key="2">
    <citation type="journal article" date="1998" name="Science">
        <title>Genome sequence of the nematode C. elegans: a platform for investigating biology.</title>
        <authorList>
            <consortium name="The C. elegans sequencing consortium"/>
        </authorList>
    </citation>
    <scope>NUCLEOTIDE SEQUENCE [LARGE SCALE GENOMIC DNA]</scope>
    <source>
        <strain>Bristol N2</strain>
    </source>
</reference>